<evidence type="ECO:0000255" key="1">
    <source>
        <dbReference type="HAMAP-Rule" id="MF_00087"/>
    </source>
</evidence>
<protein>
    <recommendedName>
        <fullName evidence="1">Glutamyl-tRNA reductase</fullName>
        <shortName evidence="1">GluTR</shortName>
        <ecNumber evidence="1">1.2.1.70</ecNumber>
    </recommendedName>
</protein>
<accession>B3E2H8</accession>
<gene>
    <name evidence="1" type="primary">hemA</name>
    <name type="ordered locus">Glov_0503</name>
</gene>
<sequence length="434" mass="48472">MNIIVVGLSHKTASVDIREKVAFSPNSIEKPLHELVNLDGIVEGIIVSTCNRVEIYATTRDIAGGIARIRRFMAEYHHLAHDLLEPHLYSYHGEEAIRHVFRVASSLDSMVVGEPQILGQIKTSYGYAAEYKSSGIILNRFLHKAFSVAKRVRTETRIASSAVSVSFAAVELARKIFGNLTDKTVLLIGAGEMCELAARHFLTNGAKGVMVTNRTFERAQRLAEEFGGEAIPFDELFLHLHKADIVLTSTGAPHAIITPPDLEEVIKRRRMRPMFLIDIAVPRDIDPAVNEMDAVYLYDMDDLQQVVAANLEGRKQEADKAEAIIAEEIIQFYKWVATLEVTPTIVALRNRFEELRKAELERTLAGWKDAPPDAEKRLEALTSAFMNKLLHQPTTVLKKAGQGNRTDLYLDALRALFDLELGGTDTNESLELEE</sequence>
<dbReference type="EC" id="1.2.1.70" evidence="1"/>
<dbReference type="EMBL" id="CP001089">
    <property type="protein sequence ID" value="ACD94231.1"/>
    <property type="molecule type" value="Genomic_DNA"/>
</dbReference>
<dbReference type="RefSeq" id="WP_012468587.1">
    <property type="nucleotide sequence ID" value="NC_010814.1"/>
</dbReference>
<dbReference type="SMR" id="B3E2H8"/>
<dbReference type="STRING" id="398767.Glov_0503"/>
<dbReference type="KEGG" id="glo:Glov_0503"/>
<dbReference type="eggNOG" id="COG0373">
    <property type="taxonomic scope" value="Bacteria"/>
</dbReference>
<dbReference type="HOGENOM" id="CLU_035113_2_2_7"/>
<dbReference type="OrthoDB" id="110209at2"/>
<dbReference type="UniPathway" id="UPA00251">
    <property type="reaction ID" value="UER00316"/>
</dbReference>
<dbReference type="Proteomes" id="UP000002420">
    <property type="component" value="Chromosome"/>
</dbReference>
<dbReference type="GO" id="GO:0008883">
    <property type="term" value="F:glutamyl-tRNA reductase activity"/>
    <property type="evidence" value="ECO:0007669"/>
    <property type="project" value="UniProtKB-UniRule"/>
</dbReference>
<dbReference type="GO" id="GO:0050661">
    <property type="term" value="F:NADP binding"/>
    <property type="evidence" value="ECO:0007669"/>
    <property type="project" value="InterPro"/>
</dbReference>
<dbReference type="GO" id="GO:0019353">
    <property type="term" value="P:protoporphyrinogen IX biosynthetic process from glutamate"/>
    <property type="evidence" value="ECO:0007669"/>
    <property type="project" value="TreeGrafter"/>
</dbReference>
<dbReference type="CDD" id="cd05213">
    <property type="entry name" value="NAD_bind_Glutamyl_tRNA_reduct"/>
    <property type="match status" value="1"/>
</dbReference>
<dbReference type="FunFam" id="3.30.460.30:FF:000001">
    <property type="entry name" value="Glutamyl-tRNA reductase"/>
    <property type="match status" value="1"/>
</dbReference>
<dbReference type="FunFam" id="3.40.50.720:FF:000031">
    <property type="entry name" value="Glutamyl-tRNA reductase"/>
    <property type="match status" value="1"/>
</dbReference>
<dbReference type="Gene3D" id="3.30.460.30">
    <property type="entry name" value="Glutamyl-tRNA reductase, N-terminal domain"/>
    <property type="match status" value="1"/>
</dbReference>
<dbReference type="Gene3D" id="3.40.50.720">
    <property type="entry name" value="NAD(P)-binding Rossmann-like Domain"/>
    <property type="match status" value="1"/>
</dbReference>
<dbReference type="HAMAP" id="MF_00087">
    <property type="entry name" value="Glu_tRNA_reductase"/>
    <property type="match status" value="1"/>
</dbReference>
<dbReference type="InterPro" id="IPR000343">
    <property type="entry name" value="4pyrrol_synth_GluRdtase"/>
</dbReference>
<dbReference type="InterPro" id="IPR015896">
    <property type="entry name" value="4pyrrol_synth_GluRdtase_dimer"/>
</dbReference>
<dbReference type="InterPro" id="IPR015895">
    <property type="entry name" value="4pyrrol_synth_GluRdtase_N"/>
</dbReference>
<dbReference type="InterPro" id="IPR018214">
    <property type="entry name" value="GluRdtase_CS"/>
</dbReference>
<dbReference type="InterPro" id="IPR036453">
    <property type="entry name" value="GluRdtase_dimer_dom_sf"/>
</dbReference>
<dbReference type="InterPro" id="IPR036343">
    <property type="entry name" value="GluRdtase_N_sf"/>
</dbReference>
<dbReference type="InterPro" id="IPR036291">
    <property type="entry name" value="NAD(P)-bd_dom_sf"/>
</dbReference>
<dbReference type="InterPro" id="IPR006151">
    <property type="entry name" value="Shikm_DH/Glu-tRNA_Rdtase"/>
</dbReference>
<dbReference type="NCBIfam" id="TIGR01035">
    <property type="entry name" value="hemA"/>
    <property type="match status" value="1"/>
</dbReference>
<dbReference type="NCBIfam" id="NF000744">
    <property type="entry name" value="PRK00045.1-3"/>
    <property type="match status" value="1"/>
</dbReference>
<dbReference type="PANTHER" id="PTHR43013">
    <property type="entry name" value="GLUTAMYL-TRNA REDUCTASE"/>
    <property type="match status" value="1"/>
</dbReference>
<dbReference type="PANTHER" id="PTHR43013:SF1">
    <property type="entry name" value="GLUTAMYL-TRNA REDUCTASE"/>
    <property type="match status" value="1"/>
</dbReference>
<dbReference type="Pfam" id="PF00745">
    <property type="entry name" value="GlutR_dimer"/>
    <property type="match status" value="1"/>
</dbReference>
<dbReference type="Pfam" id="PF05201">
    <property type="entry name" value="GlutR_N"/>
    <property type="match status" value="1"/>
</dbReference>
<dbReference type="Pfam" id="PF01488">
    <property type="entry name" value="Shikimate_DH"/>
    <property type="match status" value="1"/>
</dbReference>
<dbReference type="PIRSF" id="PIRSF000445">
    <property type="entry name" value="4pyrrol_synth_GluRdtase"/>
    <property type="match status" value="1"/>
</dbReference>
<dbReference type="SUPFAM" id="SSF69742">
    <property type="entry name" value="Glutamyl tRNA-reductase catalytic, N-terminal domain"/>
    <property type="match status" value="1"/>
</dbReference>
<dbReference type="SUPFAM" id="SSF69075">
    <property type="entry name" value="Glutamyl tRNA-reductase dimerization domain"/>
    <property type="match status" value="1"/>
</dbReference>
<dbReference type="SUPFAM" id="SSF51735">
    <property type="entry name" value="NAD(P)-binding Rossmann-fold domains"/>
    <property type="match status" value="1"/>
</dbReference>
<dbReference type="PROSITE" id="PS00747">
    <property type="entry name" value="GLUTR"/>
    <property type="match status" value="1"/>
</dbReference>
<proteinExistence type="inferred from homology"/>
<keyword id="KW-0521">NADP</keyword>
<keyword id="KW-0560">Oxidoreductase</keyword>
<keyword id="KW-0627">Porphyrin biosynthesis</keyword>
<keyword id="KW-1185">Reference proteome</keyword>
<feature type="chain" id="PRO_1000093140" description="Glutamyl-tRNA reductase">
    <location>
        <begin position="1"/>
        <end position="434"/>
    </location>
</feature>
<feature type="active site" description="Nucleophile" evidence="1">
    <location>
        <position position="50"/>
    </location>
</feature>
<feature type="binding site" evidence="1">
    <location>
        <begin position="49"/>
        <end position="52"/>
    </location>
    <ligand>
        <name>substrate</name>
    </ligand>
</feature>
<feature type="binding site" evidence="1">
    <location>
        <position position="109"/>
    </location>
    <ligand>
        <name>substrate</name>
    </ligand>
</feature>
<feature type="binding site" evidence="1">
    <location>
        <begin position="114"/>
        <end position="116"/>
    </location>
    <ligand>
        <name>substrate</name>
    </ligand>
</feature>
<feature type="binding site" evidence="1">
    <location>
        <position position="120"/>
    </location>
    <ligand>
        <name>substrate</name>
    </ligand>
</feature>
<feature type="binding site" evidence="1">
    <location>
        <begin position="189"/>
        <end position="194"/>
    </location>
    <ligand>
        <name>NADP(+)</name>
        <dbReference type="ChEBI" id="CHEBI:58349"/>
    </ligand>
</feature>
<feature type="site" description="Important for activity" evidence="1">
    <location>
        <position position="99"/>
    </location>
</feature>
<comment type="function">
    <text evidence="1">Catalyzes the NADPH-dependent reduction of glutamyl-tRNA(Glu) to glutamate 1-semialdehyde (GSA).</text>
</comment>
<comment type="catalytic activity">
    <reaction evidence="1">
        <text>(S)-4-amino-5-oxopentanoate + tRNA(Glu) + NADP(+) = L-glutamyl-tRNA(Glu) + NADPH + H(+)</text>
        <dbReference type="Rhea" id="RHEA:12344"/>
        <dbReference type="Rhea" id="RHEA-COMP:9663"/>
        <dbReference type="Rhea" id="RHEA-COMP:9680"/>
        <dbReference type="ChEBI" id="CHEBI:15378"/>
        <dbReference type="ChEBI" id="CHEBI:57501"/>
        <dbReference type="ChEBI" id="CHEBI:57783"/>
        <dbReference type="ChEBI" id="CHEBI:58349"/>
        <dbReference type="ChEBI" id="CHEBI:78442"/>
        <dbReference type="ChEBI" id="CHEBI:78520"/>
        <dbReference type="EC" id="1.2.1.70"/>
    </reaction>
</comment>
<comment type="pathway">
    <text evidence="1">Porphyrin-containing compound metabolism; protoporphyrin-IX biosynthesis; 5-aminolevulinate from L-glutamyl-tRNA(Glu): step 1/2.</text>
</comment>
<comment type="subunit">
    <text evidence="1">Homodimer.</text>
</comment>
<comment type="domain">
    <text evidence="1">Possesses an unusual extended V-shaped dimeric structure with each monomer consisting of three distinct domains arranged along a curved 'spinal' alpha-helix. The N-terminal catalytic domain specifically recognizes the glutamate moiety of the substrate. The second domain is the NADPH-binding domain, and the third C-terminal domain is responsible for dimerization.</text>
</comment>
<comment type="miscellaneous">
    <text evidence="1">During catalysis, the active site Cys acts as a nucleophile attacking the alpha-carbonyl group of tRNA-bound glutamate with the formation of a thioester intermediate between enzyme and glutamate, and the concomitant release of tRNA(Glu). The thioester intermediate is finally reduced by direct hydride transfer from NADPH, to form the product GSA.</text>
</comment>
<comment type="similarity">
    <text evidence="1">Belongs to the glutamyl-tRNA reductase family.</text>
</comment>
<reference key="1">
    <citation type="submission" date="2008-05" db="EMBL/GenBank/DDBJ databases">
        <title>Complete sequence of chromosome of Geobacter lovleyi SZ.</title>
        <authorList>
            <consortium name="US DOE Joint Genome Institute"/>
            <person name="Lucas S."/>
            <person name="Copeland A."/>
            <person name="Lapidus A."/>
            <person name="Glavina del Rio T."/>
            <person name="Dalin E."/>
            <person name="Tice H."/>
            <person name="Bruce D."/>
            <person name="Goodwin L."/>
            <person name="Pitluck S."/>
            <person name="Chertkov O."/>
            <person name="Meincke L."/>
            <person name="Brettin T."/>
            <person name="Detter J.C."/>
            <person name="Han C."/>
            <person name="Tapia R."/>
            <person name="Kuske C.R."/>
            <person name="Schmutz J."/>
            <person name="Larimer F."/>
            <person name="Land M."/>
            <person name="Hauser L."/>
            <person name="Kyrpides N."/>
            <person name="Mikhailova N."/>
            <person name="Sung Y."/>
            <person name="Fletcher K.E."/>
            <person name="Ritalahti K.M."/>
            <person name="Loeffler F.E."/>
            <person name="Richardson P."/>
        </authorList>
    </citation>
    <scope>NUCLEOTIDE SEQUENCE [LARGE SCALE GENOMIC DNA]</scope>
    <source>
        <strain>ATCC BAA-1151 / DSM 17278 / SZ</strain>
    </source>
</reference>
<name>HEM1_TRIL1</name>
<organism>
    <name type="scientific">Trichlorobacter lovleyi (strain ATCC BAA-1151 / DSM 17278 / SZ)</name>
    <name type="common">Geobacter lovleyi</name>
    <dbReference type="NCBI Taxonomy" id="398767"/>
    <lineage>
        <taxon>Bacteria</taxon>
        <taxon>Pseudomonadati</taxon>
        <taxon>Thermodesulfobacteriota</taxon>
        <taxon>Desulfuromonadia</taxon>
        <taxon>Geobacterales</taxon>
        <taxon>Geobacteraceae</taxon>
        <taxon>Trichlorobacter</taxon>
    </lineage>
</organism>